<comment type="function">
    <text evidence="1">Catalyzes the transfer of the gamma-phospho group of ATP to thymidine to generate dTMP in the salvage pathway of pyrimidine synthesis. The dTMP serves as a substrate for DNA polymerase during viral DNA replication. Allows the virus to be reactivated and to grow in non-proliferative cells lacking a high concentration of phosphorylated nucleic acid precursors.</text>
</comment>
<comment type="catalytic activity">
    <reaction evidence="1">
        <text>thymidine + ATP = dTMP + ADP + H(+)</text>
        <dbReference type="Rhea" id="RHEA:19129"/>
        <dbReference type="ChEBI" id="CHEBI:15378"/>
        <dbReference type="ChEBI" id="CHEBI:17748"/>
        <dbReference type="ChEBI" id="CHEBI:30616"/>
        <dbReference type="ChEBI" id="CHEBI:63528"/>
        <dbReference type="ChEBI" id="CHEBI:456216"/>
        <dbReference type="EC" id="2.7.1.21"/>
    </reaction>
</comment>
<comment type="subunit">
    <text evidence="1">Homodimer.</text>
</comment>
<comment type="biotechnology">
    <text>Used in molecular biology as a selectable marker to identify transfected eukaryotic cells. Used in cancer suicide gene therapy to selectively kill transformed cells.</text>
</comment>
<comment type="miscellaneous">
    <text>Phosphorylates and thereby activates certain drugs like acyclovir (ACV), valacyclovir, and famciclovir to a toxic form, that leads to successful suppression of the infection, while the uninfected cell does not have this ability because it lacks TK. Mutations in thymidine kinase may induce HSV resistance to antiviral therapies in immunocompromised patients. The most frequently observed resistant strains are unable to express TK and are avirulent in animal models of disease. Resistance may be acquired less frequently by selecting variants which no longer recognize ACV or ACV triphosphate as substrates but which retain normal functions.</text>
</comment>
<comment type="similarity">
    <text evidence="1">Belongs to the herpesviridae thymidine kinase family.</text>
</comment>
<gene>
    <name evidence="1" type="primary">TK</name>
    <name type="ordered locus">UL23</name>
</gene>
<dbReference type="EC" id="2.7.1.21" evidence="1"/>
<dbReference type="EMBL" id="M14884">
    <property type="protein sequence ID" value="AAA45814.1"/>
    <property type="molecule type" value="Genomic_DNA"/>
</dbReference>
<dbReference type="PIR" id="A24187">
    <property type="entry name" value="KIBEHF"/>
</dbReference>
<dbReference type="SMR" id="P08333"/>
<dbReference type="SABIO-RK" id="P08333"/>
<dbReference type="GO" id="GO:0005524">
    <property type="term" value="F:ATP binding"/>
    <property type="evidence" value="ECO:0007669"/>
    <property type="project" value="UniProtKB-KW"/>
</dbReference>
<dbReference type="GO" id="GO:0004797">
    <property type="term" value="F:thymidine kinase activity"/>
    <property type="evidence" value="ECO:0007669"/>
    <property type="project" value="UniProtKB-EC"/>
</dbReference>
<dbReference type="GO" id="GO:0071897">
    <property type="term" value="P:DNA biosynthetic process"/>
    <property type="evidence" value="ECO:0007669"/>
    <property type="project" value="UniProtKB-KW"/>
</dbReference>
<dbReference type="GO" id="GO:0006230">
    <property type="term" value="P:TMP biosynthetic process"/>
    <property type="evidence" value="ECO:0007669"/>
    <property type="project" value="InterPro"/>
</dbReference>
<dbReference type="Gene3D" id="3.40.50.300">
    <property type="entry name" value="P-loop containing nucleotide triphosphate hydrolases"/>
    <property type="match status" value="1"/>
</dbReference>
<dbReference type="HAMAP" id="MF_04029">
    <property type="entry name" value="HSV_KITH"/>
    <property type="match status" value="1"/>
</dbReference>
<dbReference type="InterPro" id="IPR001889">
    <property type="entry name" value="Herpes_TK"/>
</dbReference>
<dbReference type="InterPro" id="IPR027417">
    <property type="entry name" value="P-loop_NTPase"/>
</dbReference>
<dbReference type="Pfam" id="PF00693">
    <property type="entry name" value="Herpes_TK"/>
    <property type="match status" value="1"/>
</dbReference>
<dbReference type="SUPFAM" id="SSF52540">
    <property type="entry name" value="P-loop containing nucleoside triphosphate hydrolases"/>
    <property type="match status" value="1"/>
</dbReference>
<proteinExistence type="evidence at protein level"/>
<evidence type="ECO:0000255" key="1">
    <source>
        <dbReference type="HAMAP-Rule" id="MF_04029"/>
    </source>
</evidence>
<evidence type="ECO:0000256" key="2">
    <source>
        <dbReference type="SAM" id="MobiDB-lite"/>
    </source>
</evidence>
<organism>
    <name type="scientific">Human herpesvirus 1 (strain HFEM)</name>
    <name type="common">HHV-1</name>
    <name type="synonym">Human herpes simplex virus 1</name>
    <dbReference type="NCBI Taxonomy" id="10303"/>
    <lineage>
        <taxon>Viruses</taxon>
        <taxon>Duplodnaviria</taxon>
        <taxon>Heunggongvirae</taxon>
        <taxon>Peploviricota</taxon>
        <taxon>Herviviricetes</taxon>
        <taxon>Herpesvirales</taxon>
        <taxon>Orthoherpesviridae</taxon>
        <taxon>Alphaherpesvirinae</taxon>
        <taxon>Simplexvirus</taxon>
        <taxon>Simplexvirus humanalpha1</taxon>
        <taxon>Human herpesvirus 1</taxon>
    </lineage>
</organism>
<protein>
    <recommendedName>
        <fullName evidence="1">Thymidine kinase</fullName>
        <ecNumber evidence="1">2.7.1.21</ecNumber>
    </recommendedName>
</protein>
<feature type="chain" id="PRO_0000175071" description="Thymidine kinase">
    <location>
        <begin position="1"/>
        <end position="376"/>
    </location>
</feature>
<feature type="region of interest" description="Disordered" evidence="2">
    <location>
        <begin position="1"/>
        <end position="44"/>
    </location>
</feature>
<feature type="region of interest" description="Disordered" evidence="2">
    <location>
        <begin position="260"/>
        <end position="280"/>
    </location>
</feature>
<feature type="compositionally biased region" description="Basic residues" evidence="2">
    <location>
        <begin position="19"/>
        <end position="32"/>
    </location>
</feature>
<feature type="compositionally biased region" description="Basic and acidic residues" evidence="2">
    <location>
        <begin position="33"/>
        <end position="44"/>
    </location>
</feature>
<feature type="active site" description="Proton acceptor" evidence="1">
    <location>
        <position position="83"/>
    </location>
</feature>
<feature type="binding site" evidence="1">
    <location>
        <begin position="56"/>
        <end position="63"/>
    </location>
    <ligand>
        <name>ATP</name>
        <dbReference type="ChEBI" id="CHEBI:30616"/>
    </ligand>
</feature>
<feature type="binding site" evidence="1">
    <location>
        <position position="101"/>
    </location>
    <ligand>
        <name>substrate</name>
    </ligand>
</feature>
<feature type="binding site" evidence="1">
    <location>
        <position position="125"/>
    </location>
    <ligand>
        <name>substrate</name>
    </ligand>
</feature>
<feature type="binding site" evidence="1">
    <location>
        <position position="216"/>
    </location>
    <ligand>
        <name>ATP</name>
        <dbReference type="ChEBI" id="CHEBI:30616"/>
    </ligand>
</feature>
<feature type="binding site" evidence="1">
    <location>
        <position position="222"/>
    </location>
    <ligand>
        <name>substrate</name>
    </ligand>
</feature>
<name>KITH_HHV1E</name>
<keyword id="KW-0067">ATP-binding</keyword>
<keyword id="KW-0237">DNA synthesis</keyword>
<keyword id="KW-0244">Early protein</keyword>
<keyword id="KW-0418">Kinase</keyword>
<keyword id="KW-0547">Nucleotide-binding</keyword>
<keyword id="KW-0808">Transferase</keyword>
<accession>P08333</accession>
<organismHost>
    <name type="scientific">Homo sapiens</name>
    <name type="common">Human</name>
    <dbReference type="NCBI Taxonomy" id="9606"/>
</organismHost>
<reference key="1">
    <citation type="journal article" date="1986" name="Virology">
        <title>The properties and sequence of glycoprotein H of herpes simplex virus type 1.</title>
        <authorList>
            <person name="Gompels U."/>
            <person name="Minson A."/>
        </authorList>
    </citation>
    <scope>NUCLEOTIDE SEQUENCE [GENOMIC DNA]</scope>
</reference>
<sequence length="376" mass="40859">MASYPGHQHASAFDQAARSRGHSNRRTALRPRRQQEATEVRPEQKMPTLLRVYIDGPHGMGKTTTTQLLVALGSRDDIVYVPEPMTYWRVLGASETIANIYTTQHRLDQGEISAGDAAVVMTSAQITIGMPYAVTDAVLAPHIGGEAGSSHAPPPALTLIFDRHPIAALLCYPAARYLMGSMTPQAVLAFVALIPPTLPGTNIVLGALPEDRHIDRLAKRQRPGERLDLAMLAAIRRVYGLLANTVRYLQGGGSWREDWGQLSGTAVPPQGAEPQSNAGPRPHIGDTLFTLFRAPELLAPNGDLYNVFAWALDVLAKRLRPMHVFILDYDQSPAGCRDALLQLTSGMIQTHVTTPGSIPTICDLARTFAREMGEAN</sequence>